<comment type="function">
    <text evidence="1">Catalyzes the transfer of an acyl group from acyl-phosphate (acyl-PO(4)) to glycerol-3-phosphate (G3P) to form lysophosphatidic acid (LPA). This enzyme utilizes acyl-phosphate as fatty acyl donor, but not acyl-CoA or acyl-ACP.</text>
</comment>
<comment type="catalytic activity">
    <reaction evidence="1">
        <text>an acyl phosphate + sn-glycerol 3-phosphate = a 1-acyl-sn-glycero-3-phosphate + phosphate</text>
        <dbReference type="Rhea" id="RHEA:34075"/>
        <dbReference type="ChEBI" id="CHEBI:43474"/>
        <dbReference type="ChEBI" id="CHEBI:57597"/>
        <dbReference type="ChEBI" id="CHEBI:57970"/>
        <dbReference type="ChEBI" id="CHEBI:59918"/>
        <dbReference type="EC" id="2.3.1.275"/>
    </reaction>
</comment>
<comment type="pathway">
    <text evidence="1">Lipid metabolism; phospholipid metabolism.</text>
</comment>
<comment type="subunit">
    <text evidence="1">Probably interacts with PlsX.</text>
</comment>
<comment type="subcellular location">
    <subcellularLocation>
        <location evidence="1">Cell membrane</location>
        <topology evidence="1">Multi-pass membrane protein</topology>
    </subcellularLocation>
</comment>
<comment type="similarity">
    <text evidence="1">Belongs to the PlsY family.</text>
</comment>
<proteinExistence type="inferred from homology"/>
<dbReference type="EC" id="2.3.1.275" evidence="1"/>
<dbReference type="EMBL" id="CR936503">
    <property type="protein sequence ID" value="CAI55279.1"/>
    <property type="molecule type" value="Genomic_DNA"/>
</dbReference>
<dbReference type="RefSeq" id="WP_011374679.1">
    <property type="nucleotide sequence ID" value="NC_007576.1"/>
</dbReference>
<dbReference type="SMR" id="Q38X02"/>
<dbReference type="STRING" id="314315.LCA_0977"/>
<dbReference type="KEGG" id="lsa:LCA_0977"/>
<dbReference type="eggNOG" id="COG0344">
    <property type="taxonomic scope" value="Bacteria"/>
</dbReference>
<dbReference type="HOGENOM" id="CLU_081254_4_0_9"/>
<dbReference type="OrthoDB" id="9777124at2"/>
<dbReference type="UniPathway" id="UPA00085"/>
<dbReference type="Proteomes" id="UP000002707">
    <property type="component" value="Chromosome"/>
</dbReference>
<dbReference type="GO" id="GO:0005886">
    <property type="term" value="C:plasma membrane"/>
    <property type="evidence" value="ECO:0007669"/>
    <property type="project" value="UniProtKB-SubCell"/>
</dbReference>
<dbReference type="GO" id="GO:0043772">
    <property type="term" value="F:acyl-phosphate glycerol-3-phosphate acyltransferase activity"/>
    <property type="evidence" value="ECO:0007669"/>
    <property type="project" value="UniProtKB-UniRule"/>
</dbReference>
<dbReference type="GO" id="GO:0008654">
    <property type="term" value="P:phospholipid biosynthetic process"/>
    <property type="evidence" value="ECO:0007669"/>
    <property type="project" value="UniProtKB-UniRule"/>
</dbReference>
<dbReference type="HAMAP" id="MF_01043">
    <property type="entry name" value="PlsY"/>
    <property type="match status" value="1"/>
</dbReference>
<dbReference type="InterPro" id="IPR003811">
    <property type="entry name" value="G3P_acylTferase_PlsY"/>
</dbReference>
<dbReference type="NCBIfam" id="TIGR00023">
    <property type="entry name" value="glycerol-3-phosphate 1-O-acyltransferase PlsY"/>
    <property type="match status" value="1"/>
</dbReference>
<dbReference type="PANTHER" id="PTHR30309:SF0">
    <property type="entry name" value="GLYCEROL-3-PHOSPHATE ACYLTRANSFERASE-RELATED"/>
    <property type="match status" value="1"/>
</dbReference>
<dbReference type="PANTHER" id="PTHR30309">
    <property type="entry name" value="INNER MEMBRANE PROTEIN YGIH"/>
    <property type="match status" value="1"/>
</dbReference>
<dbReference type="Pfam" id="PF02660">
    <property type="entry name" value="G3P_acyltransf"/>
    <property type="match status" value="1"/>
</dbReference>
<dbReference type="SMART" id="SM01207">
    <property type="entry name" value="G3P_acyltransf"/>
    <property type="match status" value="1"/>
</dbReference>
<gene>
    <name evidence="1" type="primary">plsY</name>
    <name type="ordered locus">LCA_0977</name>
</gene>
<name>PLSY_LATSS</name>
<keyword id="KW-1003">Cell membrane</keyword>
<keyword id="KW-0444">Lipid biosynthesis</keyword>
<keyword id="KW-0443">Lipid metabolism</keyword>
<keyword id="KW-0472">Membrane</keyword>
<keyword id="KW-0594">Phospholipid biosynthesis</keyword>
<keyword id="KW-1208">Phospholipid metabolism</keyword>
<keyword id="KW-1185">Reference proteome</keyword>
<keyword id="KW-0808">Transferase</keyword>
<keyword id="KW-0812">Transmembrane</keyword>
<keyword id="KW-1133">Transmembrane helix</keyword>
<feature type="chain" id="PRO_0000250307" description="Glycerol-3-phosphate acyltransferase">
    <location>
        <begin position="1"/>
        <end position="206"/>
    </location>
</feature>
<feature type="transmembrane region" description="Helical" evidence="1">
    <location>
        <begin position="3"/>
        <end position="23"/>
    </location>
</feature>
<feature type="transmembrane region" description="Helical" evidence="1">
    <location>
        <begin position="47"/>
        <end position="67"/>
    </location>
</feature>
<feature type="transmembrane region" description="Helical" evidence="1">
    <location>
        <begin position="79"/>
        <end position="99"/>
    </location>
</feature>
<feature type="transmembrane region" description="Helical" evidence="1">
    <location>
        <begin position="119"/>
        <end position="139"/>
    </location>
</feature>
<feature type="transmembrane region" description="Helical" evidence="1">
    <location>
        <begin position="152"/>
        <end position="172"/>
    </location>
</feature>
<evidence type="ECO:0000255" key="1">
    <source>
        <dbReference type="HAMAP-Rule" id="MF_01043"/>
    </source>
</evidence>
<protein>
    <recommendedName>
        <fullName evidence="1">Glycerol-3-phosphate acyltransferase</fullName>
    </recommendedName>
    <alternativeName>
        <fullName evidence="1">Acyl-PO4 G3P acyltransferase</fullName>
    </alternativeName>
    <alternativeName>
        <fullName evidence="1">Acyl-phosphate--glycerol-3-phosphate acyltransferase</fullName>
    </alternativeName>
    <alternativeName>
        <fullName evidence="1">G3P acyltransferase</fullName>
        <shortName evidence="1">GPAT</shortName>
        <ecNumber evidence="1">2.3.1.275</ecNumber>
    </alternativeName>
    <alternativeName>
        <fullName evidence="1">Lysophosphatidic acid synthase</fullName>
        <shortName evidence="1">LPA synthase</shortName>
    </alternativeName>
</protein>
<accession>Q38X02</accession>
<organism>
    <name type="scientific">Latilactobacillus sakei subsp. sakei (strain 23K)</name>
    <name type="common">Lactobacillus sakei subsp. sakei</name>
    <dbReference type="NCBI Taxonomy" id="314315"/>
    <lineage>
        <taxon>Bacteria</taxon>
        <taxon>Bacillati</taxon>
        <taxon>Bacillota</taxon>
        <taxon>Bacilli</taxon>
        <taxon>Lactobacillales</taxon>
        <taxon>Lactobacillaceae</taxon>
        <taxon>Latilactobacillus</taxon>
    </lineage>
</organism>
<sequence>MKLSLIFILAYLIGSFPSGVIIGRVFCHKDPRDAGSHNIGTTNSYRVLGPIAGTAVLFLDILKGTLAASLPMIFHTSNHSLVLVVGLAAVIGHAYSIFLRFTGGKAVATSAGILLAYNPLFFVIASTIFISVILITSMVSMASIIGPLLIAILSFYTHDWLLGTIATLVLIFLTYRHRENISRIKNGTENLVPFGLYYRYKQKKRQ</sequence>
<reference key="1">
    <citation type="journal article" date="2005" name="Nat. Biotechnol.">
        <title>The complete genome sequence of the meat-borne lactic acid bacterium Lactobacillus sakei 23K.</title>
        <authorList>
            <person name="Chaillou S."/>
            <person name="Champomier-Verges M.-C."/>
            <person name="Cornet M."/>
            <person name="Crutz-Le Coq A.-M."/>
            <person name="Dudez A.-M."/>
            <person name="Martin V."/>
            <person name="Beaufils S."/>
            <person name="Darbon-Rongere E."/>
            <person name="Bossy R."/>
            <person name="Loux V."/>
            <person name="Zagorec M."/>
        </authorList>
    </citation>
    <scope>NUCLEOTIDE SEQUENCE [LARGE SCALE GENOMIC DNA]</scope>
    <source>
        <strain>23K</strain>
    </source>
</reference>